<evidence type="ECO:0000250" key="1"/>
<evidence type="ECO:0000305" key="2"/>
<evidence type="ECO:0000312" key="3">
    <source>
        <dbReference type="MGI" id="MGI:1923029"/>
    </source>
</evidence>
<protein>
    <recommendedName>
        <fullName evidence="2">Dynein axonemal assembly factor 9</fullName>
        <shortName evidence="2">DNAAF9</shortName>
    </recommendedName>
</protein>
<name>DAAF9_MOUSE</name>
<gene>
    <name evidence="3" type="primary">Dnaaf9</name>
</gene>
<proteinExistence type="evidence at protein level"/>
<keyword id="KW-1185">Reference proteome</keyword>
<comment type="function">
    <text evidence="1">May act as an effector for ARL3.</text>
</comment>
<comment type="subunit">
    <text evidence="1">Interacts with ARL3.</text>
</comment>
<sequence>MDSFDPQQLGLSPARFAGTFGSGAASVSCSRLRQVQSVLTQSSKSQPDGILCILGIDSRYNEGCRELANYLLFGLYSQNATDFEKTGFSEEILDDVILLIKSDSVHLYCNPVNYRYLLPYVAHWRNLHFHCMTENEYEDEEAAEEFKISSFVDMVRDCSRIGIPYSSQGHLQIFDMFVVEKWPIVQAFALEGIGGDGFFTMKYELQDVSLSLWNVYSRMDPASLENMLSEDLAVFEHQWTSFFANFDTEIPFLLELSESQAGEPFRSYFGHGMLSSHITENSPHRQPFVLFGNHSTRDNLSAGSFNFPSEGHLVRNTGPAGSFAKHMVAQCVSPKGPLACSRTYFFGATHVPYLGDNEKLPRTTEQIRLLSQIYAAVIEAVLAGIACYAKTCSLAKAKEVAEHTLESGLVFTELVPFKADLRSKVTFHIHAVNNQGRIVPLNNEDSLSFVKTARMTVYDIPDLLGGGGGGCLGSVVFSESFLTSRILVKEKDGTITPETSYIILTAAIPRFCSWLVEDSEIKLSEKTLQATKGDDCCLGTLLTGGKGAYLYSNSPQSGPEEGSAYFFSGGLLFSHRHHGSIVIAKEHVDAFSFYDGDSTSVVAALLIHFRSSILPHLPVHFHGSSNFLMLALFPKSKIYQAFYSEVFSPWQQQDNSGLSLKVIQEDGLSAEQKRLHSNAQKLFSALSPPAQDWSSPKLLSGKLPELDRFLQHFAIGSIGQEPVMRAHLVGLLQQPEMSPAHEVESDKVVISIVTGLPGCHASKLCAFLITLHKEYGRWMVYRQIMDSSECFHAAHFQKYLSSALEAQQNRSARQSAYIRKKTRLLVVLQGYTDVIDVVQALQTHPDPNVRSYFTIGAVTVCVEPLSCYMEHRFLFPKCLDQCSQGVVSNVVFTSHTAEQKHPLLVQLQTLIRASNPTAAFILAENGIVTRNEDIELILSENSFSSPQMLRSRYLLFPGWYEGKFDAGSVFPLMVQICVWFDCPLEKTRFVSRCRAIQSSIKPSPFSGNIYHILGKVKFSDSEKTMEVCHNTLTNSLTIVPVLEGPTPPPNSRSSPQDNGQPECYLVFIGCSLKEDSLKDWLRQSAKQRPQRKALKTRGMLTQQEIKNIHVKRHLDPLPAGYFYNGTQFVNFFGDKTDFHPLMDQFMNDYVEEANREIERYNRELEQQEYRDLFEQKPKP</sequence>
<accession>Q7TT23</accession>
<accession>Q3UPD4</accession>
<organism>
    <name type="scientific">Mus musculus</name>
    <name type="common">Mouse</name>
    <dbReference type="NCBI Taxonomy" id="10090"/>
    <lineage>
        <taxon>Eukaryota</taxon>
        <taxon>Metazoa</taxon>
        <taxon>Chordata</taxon>
        <taxon>Craniata</taxon>
        <taxon>Vertebrata</taxon>
        <taxon>Euteleostomi</taxon>
        <taxon>Mammalia</taxon>
        <taxon>Eutheria</taxon>
        <taxon>Euarchontoglires</taxon>
        <taxon>Glires</taxon>
        <taxon>Rodentia</taxon>
        <taxon>Myomorpha</taxon>
        <taxon>Muroidea</taxon>
        <taxon>Muridae</taxon>
        <taxon>Murinae</taxon>
        <taxon>Mus</taxon>
        <taxon>Mus</taxon>
    </lineage>
</organism>
<dbReference type="EMBL" id="AK143611">
    <property type="protein sequence ID" value="BAE25462.1"/>
    <property type="molecule type" value="mRNA"/>
</dbReference>
<dbReference type="EMBL" id="BC052447">
    <property type="protein sequence ID" value="AAH52447.2"/>
    <property type="molecule type" value="mRNA"/>
</dbReference>
<dbReference type="CCDS" id="CCDS16750.1"/>
<dbReference type="RefSeq" id="NP_083708.1">
    <property type="nucleotide sequence ID" value="NM_029432.2"/>
</dbReference>
<dbReference type="FunCoup" id="Q7TT23">
    <property type="interactions" value="104"/>
</dbReference>
<dbReference type="STRING" id="10090.ENSMUSP00000046992"/>
<dbReference type="GlyGen" id="Q7TT23">
    <property type="glycosylation" value="1 site"/>
</dbReference>
<dbReference type="iPTMnet" id="Q7TT23"/>
<dbReference type="PhosphoSitePlus" id="Q7TT23"/>
<dbReference type="SwissPalm" id="Q7TT23"/>
<dbReference type="PaxDb" id="10090-ENSMUSP00000046992"/>
<dbReference type="Pumba" id="Q7TT23"/>
<dbReference type="Antibodypedia" id="23528">
    <property type="antibodies" value="72 antibodies from 15 providers"/>
</dbReference>
<dbReference type="DNASU" id="228602"/>
<dbReference type="Ensembl" id="ENSMUST00000044766.15">
    <property type="protein sequence ID" value="ENSMUSP00000046992.9"/>
    <property type="gene ID" value="ENSMUSG00000027309.19"/>
</dbReference>
<dbReference type="GeneID" id="228602"/>
<dbReference type="KEGG" id="mmu:228602"/>
<dbReference type="UCSC" id="uc008mjw.1">
    <property type="organism name" value="mouse"/>
</dbReference>
<dbReference type="AGR" id="MGI:1923029"/>
<dbReference type="CTD" id="25943"/>
<dbReference type="MGI" id="MGI:1923029">
    <property type="gene designation" value="Dnaaf9"/>
</dbReference>
<dbReference type="VEuPathDB" id="HostDB:ENSMUSG00000027309"/>
<dbReference type="eggNOG" id="ENOG502QUJP">
    <property type="taxonomic scope" value="Eukaryota"/>
</dbReference>
<dbReference type="GeneTree" id="ENSGT00390000003692"/>
<dbReference type="HOGENOM" id="CLU_008324_0_0_1"/>
<dbReference type="InParanoid" id="Q7TT23"/>
<dbReference type="OMA" id="HPAGEKW"/>
<dbReference type="OrthoDB" id="72033at2759"/>
<dbReference type="PhylomeDB" id="Q7TT23"/>
<dbReference type="TreeFam" id="TF329802"/>
<dbReference type="BioGRID-ORCS" id="228602">
    <property type="hits" value="2 hits in 79 CRISPR screens"/>
</dbReference>
<dbReference type="PRO" id="PR:Q7TT23"/>
<dbReference type="Proteomes" id="UP000000589">
    <property type="component" value="Chromosome 2"/>
</dbReference>
<dbReference type="RNAct" id="Q7TT23">
    <property type="molecule type" value="protein"/>
</dbReference>
<dbReference type="Bgee" id="ENSMUSG00000027309">
    <property type="expression patterns" value="Expressed in rostral migratory stream and 234 other cell types or tissues"/>
</dbReference>
<dbReference type="ExpressionAtlas" id="Q7TT23">
    <property type="expression patterns" value="baseline and differential"/>
</dbReference>
<dbReference type="CDD" id="cd22936">
    <property type="entry name" value="shulin_C20orf194-like"/>
    <property type="match status" value="1"/>
</dbReference>
<dbReference type="InterPro" id="IPR040342">
    <property type="entry name" value="C20orf194-like"/>
</dbReference>
<dbReference type="InterPro" id="IPR056414">
    <property type="entry name" value="CobW_C_DAAF9"/>
</dbReference>
<dbReference type="InterPro" id="IPR056498">
    <property type="entry name" value="DAAF9_N"/>
</dbReference>
<dbReference type="PANTHER" id="PTHR33664:SF1">
    <property type="entry name" value="DYNEIN AXONEMAL ASSEMBLY FACTOR 9"/>
    <property type="match status" value="1"/>
</dbReference>
<dbReference type="PANTHER" id="PTHR33664">
    <property type="entry name" value="RCG26366"/>
    <property type="match status" value="1"/>
</dbReference>
<dbReference type="Pfam" id="PF23319">
    <property type="entry name" value="CobW_C_DAAF9"/>
    <property type="match status" value="1"/>
</dbReference>
<dbReference type="Pfam" id="PF25203">
    <property type="entry name" value="DAAF9"/>
    <property type="match status" value="1"/>
</dbReference>
<dbReference type="Pfam" id="PF25204">
    <property type="entry name" value="DAAF9_2"/>
    <property type="match status" value="1"/>
</dbReference>
<dbReference type="Pfam" id="PF23281">
    <property type="entry name" value="DAAF9_N"/>
    <property type="match status" value="1"/>
</dbReference>
<reference key="1">
    <citation type="journal article" date="2005" name="Science">
        <title>The transcriptional landscape of the mammalian genome.</title>
        <authorList>
            <person name="Carninci P."/>
            <person name="Kasukawa T."/>
            <person name="Katayama S."/>
            <person name="Gough J."/>
            <person name="Frith M.C."/>
            <person name="Maeda N."/>
            <person name="Oyama R."/>
            <person name="Ravasi T."/>
            <person name="Lenhard B."/>
            <person name="Wells C."/>
            <person name="Kodzius R."/>
            <person name="Shimokawa K."/>
            <person name="Bajic V.B."/>
            <person name="Brenner S.E."/>
            <person name="Batalov S."/>
            <person name="Forrest A.R."/>
            <person name="Zavolan M."/>
            <person name="Davis M.J."/>
            <person name="Wilming L.G."/>
            <person name="Aidinis V."/>
            <person name="Allen J.E."/>
            <person name="Ambesi-Impiombato A."/>
            <person name="Apweiler R."/>
            <person name="Aturaliya R.N."/>
            <person name="Bailey T.L."/>
            <person name="Bansal M."/>
            <person name="Baxter L."/>
            <person name="Beisel K.W."/>
            <person name="Bersano T."/>
            <person name="Bono H."/>
            <person name="Chalk A.M."/>
            <person name="Chiu K.P."/>
            <person name="Choudhary V."/>
            <person name="Christoffels A."/>
            <person name="Clutterbuck D.R."/>
            <person name="Crowe M.L."/>
            <person name="Dalla E."/>
            <person name="Dalrymple B.P."/>
            <person name="de Bono B."/>
            <person name="Della Gatta G."/>
            <person name="di Bernardo D."/>
            <person name="Down T."/>
            <person name="Engstrom P."/>
            <person name="Fagiolini M."/>
            <person name="Faulkner G."/>
            <person name="Fletcher C.F."/>
            <person name="Fukushima T."/>
            <person name="Furuno M."/>
            <person name="Futaki S."/>
            <person name="Gariboldi M."/>
            <person name="Georgii-Hemming P."/>
            <person name="Gingeras T.R."/>
            <person name="Gojobori T."/>
            <person name="Green R.E."/>
            <person name="Gustincich S."/>
            <person name="Harbers M."/>
            <person name="Hayashi Y."/>
            <person name="Hensch T.K."/>
            <person name="Hirokawa N."/>
            <person name="Hill D."/>
            <person name="Huminiecki L."/>
            <person name="Iacono M."/>
            <person name="Ikeo K."/>
            <person name="Iwama A."/>
            <person name="Ishikawa T."/>
            <person name="Jakt M."/>
            <person name="Kanapin A."/>
            <person name="Katoh M."/>
            <person name="Kawasawa Y."/>
            <person name="Kelso J."/>
            <person name="Kitamura H."/>
            <person name="Kitano H."/>
            <person name="Kollias G."/>
            <person name="Krishnan S.P."/>
            <person name="Kruger A."/>
            <person name="Kummerfeld S.K."/>
            <person name="Kurochkin I.V."/>
            <person name="Lareau L.F."/>
            <person name="Lazarevic D."/>
            <person name="Lipovich L."/>
            <person name="Liu J."/>
            <person name="Liuni S."/>
            <person name="McWilliam S."/>
            <person name="Madan Babu M."/>
            <person name="Madera M."/>
            <person name="Marchionni L."/>
            <person name="Matsuda H."/>
            <person name="Matsuzawa S."/>
            <person name="Miki H."/>
            <person name="Mignone F."/>
            <person name="Miyake S."/>
            <person name="Morris K."/>
            <person name="Mottagui-Tabar S."/>
            <person name="Mulder N."/>
            <person name="Nakano N."/>
            <person name="Nakauchi H."/>
            <person name="Ng P."/>
            <person name="Nilsson R."/>
            <person name="Nishiguchi S."/>
            <person name="Nishikawa S."/>
            <person name="Nori F."/>
            <person name="Ohara O."/>
            <person name="Okazaki Y."/>
            <person name="Orlando V."/>
            <person name="Pang K.C."/>
            <person name="Pavan W.J."/>
            <person name="Pavesi G."/>
            <person name="Pesole G."/>
            <person name="Petrovsky N."/>
            <person name="Piazza S."/>
            <person name="Reed J."/>
            <person name="Reid J.F."/>
            <person name="Ring B.Z."/>
            <person name="Ringwald M."/>
            <person name="Rost B."/>
            <person name="Ruan Y."/>
            <person name="Salzberg S.L."/>
            <person name="Sandelin A."/>
            <person name="Schneider C."/>
            <person name="Schoenbach C."/>
            <person name="Sekiguchi K."/>
            <person name="Semple C.A."/>
            <person name="Seno S."/>
            <person name="Sessa L."/>
            <person name="Sheng Y."/>
            <person name="Shibata Y."/>
            <person name="Shimada H."/>
            <person name="Shimada K."/>
            <person name="Silva D."/>
            <person name="Sinclair B."/>
            <person name="Sperling S."/>
            <person name="Stupka E."/>
            <person name="Sugiura K."/>
            <person name="Sultana R."/>
            <person name="Takenaka Y."/>
            <person name="Taki K."/>
            <person name="Tammoja K."/>
            <person name="Tan S.L."/>
            <person name="Tang S."/>
            <person name="Taylor M.S."/>
            <person name="Tegner J."/>
            <person name="Teichmann S.A."/>
            <person name="Ueda H.R."/>
            <person name="van Nimwegen E."/>
            <person name="Verardo R."/>
            <person name="Wei C.L."/>
            <person name="Yagi K."/>
            <person name="Yamanishi H."/>
            <person name="Zabarovsky E."/>
            <person name="Zhu S."/>
            <person name="Zimmer A."/>
            <person name="Hide W."/>
            <person name="Bult C."/>
            <person name="Grimmond S.M."/>
            <person name="Teasdale R.D."/>
            <person name="Liu E.T."/>
            <person name="Brusic V."/>
            <person name="Quackenbush J."/>
            <person name="Wahlestedt C."/>
            <person name="Mattick J.S."/>
            <person name="Hume D.A."/>
            <person name="Kai C."/>
            <person name="Sasaki D."/>
            <person name="Tomaru Y."/>
            <person name="Fukuda S."/>
            <person name="Kanamori-Katayama M."/>
            <person name="Suzuki M."/>
            <person name="Aoki J."/>
            <person name="Arakawa T."/>
            <person name="Iida J."/>
            <person name="Imamura K."/>
            <person name="Itoh M."/>
            <person name="Kato T."/>
            <person name="Kawaji H."/>
            <person name="Kawagashira N."/>
            <person name="Kawashima T."/>
            <person name="Kojima M."/>
            <person name="Kondo S."/>
            <person name="Konno H."/>
            <person name="Nakano K."/>
            <person name="Ninomiya N."/>
            <person name="Nishio T."/>
            <person name="Okada M."/>
            <person name="Plessy C."/>
            <person name="Shibata K."/>
            <person name="Shiraki T."/>
            <person name="Suzuki S."/>
            <person name="Tagami M."/>
            <person name="Waki K."/>
            <person name="Watahiki A."/>
            <person name="Okamura-Oho Y."/>
            <person name="Suzuki H."/>
            <person name="Kawai J."/>
            <person name="Hayashizaki Y."/>
        </authorList>
    </citation>
    <scope>NUCLEOTIDE SEQUENCE [LARGE SCALE MRNA]</scope>
    <source>
        <strain>C57BL/6J</strain>
        <tissue>Spleen</tissue>
    </source>
</reference>
<reference key="2">
    <citation type="journal article" date="2004" name="Genome Res.">
        <title>The status, quality, and expansion of the NIH full-length cDNA project: the Mammalian Gene Collection (MGC).</title>
        <authorList>
            <consortium name="The MGC Project Team"/>
        </authorList>
    </citation>
    <scope>NUCLEOTIDE SEQUENCE [LARGE SCALE MRNA]</scope>
    <source>
        <strain>C57BL/6J</strain>
        <tissue>Brain</tissue>
    </source>
</reference>
<reference key="3">
    <citation type="journal article" date="2010" name="Cell">
        <title>A tissue-specific atlas of mouse protein phosphorylation and expression.</title>
        <authorList>
            <person name="Huttlin E.L."/>
            <person name="Jedrychowski M.P."/>
            <person name="Elias J.E."/>
            <person name="Goswami T."/>
            <person name="Rad R."/>
            <person name="Beausoleil S.A."/>
            <person name="Villen J."/>
            <person name="Haas W."/>
            <person name="Sowa M.E."/>
            <person name="Gygi S.P."/>
        </authorList>
    </citation>
    <scope>IDENTIFICATION BY MASS SPECTROMETRY [LARGE SCALE ANALYSIS]</scope>
    <source>
        <tissue>Brown adipose tissue</tissue>
        <tissue>Liver</tissue>
        <tissue>Testis</tissue>
    </source>
</reference>
<feature type="chain" id="PRO_0000236043" description="Dynein axonemal assembly factor 9">
    <location>
        <begin position="1"/>
        <end position="1179"/>
    </location>
</feature>
<feature type="sequence conflict" description="In Ref. 1; BAE25462." evidence="2" ref="1">
    <original>D</original>
    <variation>E</variation>
    <location>
        <position position="175"/>
    </location>
</feature>
<feature type="sequence conflict" description="In Ref. 1; BAE25462." evidence="2" ref="1">
    <original>F</original>
    <variation>L</variation>
    <location>
        <position position="307"/>
    </location>
</feature>